<organism>
    <name type="scientific">Aeromonas hydrophila subsp. hydrophila (strain ATCC 7966 / DSM 30187 / BCRC 13018 / CCUG 14551 / JCM 1027 / KCTC 2358 / NCIMB 9240 / NCTC 8049)</name>
    <dbReference type="NCBI Taxonomy" id="380703"/>
    <lineage>
        <taxon>Bacteria</taxon>
        <taxon>Pseudomonadati</taxon>
        <taxon>Pseudomonadota</taxon>
        <taxon>Gammaproteobacteria</taxon>
        <taxon>Aeromonadales</taxon>
        <taxon>Aeromonadaceae</taxon>
        <taxon>Aeromonas</taxon>
    </lineage>
</organism>
<dbReference type="EMBL" id="CP000462">
    <property type="protein sequence ID" value="ABK38389.1"/>
    <property type="status" value="ALT_INIT"/>
    <property type="molecule type" value="Genomic_DNA"/>
</dbReference>
<dbReference type="RefSeq" id="WP_005304404.1">
    <property type="nucleotide sequence ID" value="NC_008570.1"/>
</dbReference>
<dbReference type="RefSeq" id="YP_857987.1">
    <property type="nucleotide sequence ID" value="NC_008570.1"/>
</dbReference>
<dbReference type="SMR" id="A0KNY6"/>
<dbReference type="STRING" id="380703.AHA_3517"/>
<dbReference type="EnsemblBacteria" id="ABK38389">
    <property type="protein sequence ID" value="ABK38389"/>
    <property type="gene ID" value="AHA_3517"/>
</dbReference>
<dbReference type="GeneID" id="47846863"/>
<dbReference type="KEGG" id="aha:AHA_3517"/>
<dbReference type="PATRIC" id="fig|380703.7.peg.3501"/>
<dbReference type="eggNOG" id="COG0316">
    <property type="taxonomic scope" value="Bacteria"/>
</dbReference>
<dbReference type="HOGENOM" id="CLU_069054_5_3_6"/>
<dbReference type="OrthoDB" id="9801228at2"/>
<dbReference type="Proteomes" id="UP000000756">
    <property type="component" value="Chromosome"/>
</dbReference>
<dbReference type="GO" id="GO:0005829">
    <property type="term" value="C:cytosol"/>
    <property type="evidence" value="ECO:0007669"/>
    <property type="project" value="TreeGrafter"/>
</dbReference>
<dbReference type="GO" id="GO:0051537">
    <property type="term" value="F:2 iron, 2 sulfur cluster binding"/>
    <property type="evidence" value="ECO:0007669"/>
    <property type="project" value="TreeGrafter"/>
</dbReference>
<dbReference type="GO" id="GO:0051539">
    <property type="term" value="F:4 iron, 4 sulfur cluster binding"/>
    <property type="evidence" value="ECO:0007669"/>
    <property type="project" value="TreeGrafter"/>
</dbReference>
<dbReference type="GO" id="GO:0005506">
    <property type="term" value="F:iron ion binding"/>
    <property type="evidence" value="ECO:0007669"/>
    <property type="project" value="UniProtKB-UniRule"/>
</dbReference>
<dbReference type="GO" id="GO:0016226">
    <property type="term" value="P:iron-sulfur cluster assembly"/>
    <property type="evidence" value="ECO:0007669"/>
    <property type="project" value="UniProtKB-UniRule"/>
</dbReference>
<dbReference type="FunFam" id="2.60.300.12:FF:000002">
    <property type="entry name" value="Iron-sulfur cluster insertion protein ErpA"/>
    <property type="match status" value="1"/>
</dbReference>
<dbReference type="Gene3D" id="2.60.300.12">
    <property type="entry name" value="HesB-like domain"/>
    <property type="match status" value="1"/>
</dbReference>
<dbReference type="HAMAP" id="MF_01380">
    <property type="entry name" value="Fe_S_insert_ErpA"/>
    <property type="match status" value="1"/>
</dbReference>
<dbReference type="InterPro" id="IPR000361">
    <property type="entry name" value="FeS_biogenesis"/>
</dbReference>
<dbReference type="InterPro" id="IPR016092">
    <property type="entry name" value="FeS_cluster_insertion"/>
</dbReference>
<dbReference type="InterPro" id="IPR017870">
    <property type="entry name" value="FeS_cluster_insertion_CS"/>
</dbReference>
<dbReference type="InterPro" id="IPR023063">
    <property type="entry name" value="FeS_cluster_insertion_RrpA"/>
</dbReference>
<dbReference type="InterPro" id="IPR035903">
    <property type="entry name" value="HesB-like_dom_sf"/>
</dbReference>
<dbReference type="NCBIfam" id="TIGR00049">
    <property type="entry name" value="iron-sulfur cluster assembly accessory protein"/>
    <property type="match status" value="1"/>
</dbReference>
<dbReference type="NCBIfam" id="NF010147">
    <property type="entry name" value="PRK13623.1"/>
    <property type="match status" value="1"/>
</dbReference>
<dbReference type="PANTHER" id="PTHR43011">
    <property type="entry name" value="IRON-SULFUR CLUSTER ASSEMBLY 2 HOMOLOG, MITOCHONDRIAL"/>
    <property type="match status" value="1"/>
</dbReference>
<dbReference type="PANTHER" id="PTHR43011:SF1">
    <property type="entry name" value="IRON-SULFUR CLUSTER ASSEMBLY 2 HOMOLOG, MITOCHONDRIAL"/>
    <property type="match status" value="1"/>
</dbReference>
<dbReference type="Pfam" id="PF01521">
    <property type="entry name" value="Fe-S_biosyn"/>
    <property type="match status" value="1"/>
</dbReference>
<dbReference type="SUPFAM" id="SSF89360">
    <property type="entry name" value="HesB-like domain"/>
    <property type="match status" value="1"/>
</dbReference>
<dbReference type="PROSITE" id="PS01152">
    <property type="entry name" value="HESB"/>
    <property type="match status" value="1"/>
</dbReference>
<accession>A0KNY6</accession>
<keyword id="KW-0408">Iron</keyword>
<keyword id="KW-0411">Iron-sulfur</keyword>
<keyword id="KW-0479">Metal-binding</keyword>
<keyword id="KW-1185">Reference proteome</keyword>
<comment type="function">
    <text evidence="1">Required for insertion of 4Fe-4S clusters for at least IspG.</text>
</comment>
<comment type="cofactor">
    <cofactor evidence="1">
        <name>iron-sulfur cluster</name>
        <dbReference type="ChEBI" id="CHEBI:30408"/>
    </cofactor>
    <text evidence="1">Binds 1 iron-sulfur cluster per subunit.</text>
</comment>
<comment type="subunit">
    <text evidence="1">Homodimer.</text>
</comment>
<comment type="similarity">
    <text evidence="1">Belongs to the HesB/IscA family.</text>
</comment>
<comment type="sequence caution" evidence="2">
    <conflict type="erroneous initiation">
        <sequence resource="EMBL-CDS" id="ABK38389"/>
    </conflict>
</comment>
<reference key="1">
    <citation type="journal article" date="2006" name="J. Bacteriol.">
        <title>Genome sequence of Aeromonas hydrophila ATCC 7966T: jack of all trades.</title>
        <authorList>
            <person name="Seshadri R."/>
            <person name="Joseph S.W."/>
            <person name="Chopra A.K."/>
            <person name="Sha J."/>
            <person name="Shaw J."/>
            <person name="Graf J."/>
            <person name="Haft D.H."/>
            <person name="Wu M."/>
            <person name="Ren Q."/>
            <person name="Rosovitz M.J."/>
            <person name="Madupu R."/>
            <person name="Tallon L."/>
            <person name="Kim M."/>
            <person name="Jin S."/>
            <person name="Vuong H."/>
            <person name="Stine O.C."/>
            <person name="Ali A."/>
            <person name="Horneman A.J."/>
            <person name="Heidelberg J.F."/>
        </authorList>
    </citation>
    <scope>NUCLEOTIDE SEQUENCE [LARGE SCALE GENOMIC DNA]</scope>
    <source>
        <strain>ATCC 7966 / DSM 30187 / BCRC 13018 / CCUG 14551 / JCM 1027 / KCTC 2358 / NCIMB 9240 / NCTC 8049</strain>
    </source>
</reference>
<gene>
    <name evidence="1" type="primary">erpA</name>
    <name type="ordered locus">AHA_3517</name>
</gene>
<name>ERPA_AERHH</name>
<evidence type="ECO:0000255" key="1">
    <source>
        <dbReference type="HAMAP-Rule" id="MF_01380"/>
    </source>
</evidence>
<evidence type="ECO:0000305" key="2"/>
<proteinExistence type="inferred from homology"/>
<protein>
    <recommendedName>
        <fullName evidence="1">Iron-sulfur cluster insertion protein ErpA</fullName>
    </recommendedName>
</protein>
<sequence>MSAVAEAPLPIQMTDAAANKVKTLITEEENPELKLRVYITGGGCSGFQYGFTFDEKINEGDTVVEKSGVTMVIDPMSLQYLVGGSVDYTEGLEGSRFTVTNPNATTTCGCGSSFSI</sequence>
<feature type="chain" id="PRO_0000311440" description="Iron-sulfur cluster insertion protein ErpA">
    <location>
        <begin position="1"/>
        <end position="116"/>
    </location>
</feature>
<feature type="binding site" evidence="1">
    <location>
        <position position="44"/>
    </location>
    <ligand>
        <name>iron-sulfur cluster</name>
        <dbReference type="ChEBI" id="CHEBI:30408"/>
    </ligand>
</feature>
<feature type="binding site" evidence="1">
    <location>
        <position position="108"/>
    </location>
    <ligand>
        <name>iron-sulfur cluster</name>
        <dbReference type="ChEBI" id="CHEBI:30408"/>
    </ligand>
</feature>
<feature type="binding site" evidence="1">
    <location>
        <position position="110"/>
    </location>
    <ligand>
        <name>iron-sulfur cluster</name>
        <dbReference type="ChEBI" id="CHEBI:30408"/>
    </ligand>
</feature>